<accession>A5VAN5</accession>
<sequence length="260" mass="27873">MLLAIDAGNTNIVFALVDGGAIVARWRIATDARRTADEYAVWLHQLLQLEGHDRSVIEAVIIATVVPRALHNLEVLASKYFGVEALVAGRPPVEWGITLDVDEPQNVGADRAVNVIAAHKRHPGDLILIDFGTATTFDVVDYSGAYKGGIIAPGINLSLDALVAAAAKLPRIAIEAPETSTVIGRTTQDQMLIGIYFGYVAMIEGLVARMKAEIGRPATVIATGGLATLFERHVKLFDSIEPDLTIQGLGIMYDRLKTGP</sequence>
<organism>
    <name type="scientific">Rhizorhabdus wittichii (strain DSM 6014 / CCUG 31198 / JCM 15750 / NBRC 105917 / EY 4224 / RW1)</name>
    <name type="common">Sphingomonas wittichii</name>
    <dbReference type="NCBI Taxonomy" id="392499"/>
    <lineage>
        <taxon>Bacteria</taxon>
        <taxon>Pseudomonadati</taxon>
        <taxon>Pseudomonadota</taxon>
        <taxon>Alphaproteobacteria</taxon>
        <taxon>Sphingomonadales</taxon>
        <taxon>Sphingomonadaceae</taxon>
        <taxon>Rhizorhabdus</taxon>
    </lineage>
</organism>
<evidence type="ECO:0000255" key="1">
    <source>
        <dbReference type="HAMAP-Rule" id="MF_01274"/>
    </source>
</evidence>
<gene>
    <name evidence="1" type="primary">coaX</name>
    <name type="ordered locus">Swit_3000</name>
</gene>
<name>COAX_RHIWR</name>
<proteinExistence type="inferred from homology"/>
<comment type="function">
    <text evidence="1">Catalyzes the phosphorylation of pantothenate (Pan), the first step in CoA biosynthesis.</text>
</comment>
<comment type="catalytic activity">
    <reaction evidence="1">
        <text>(R)-pantothenate + ATP = (R)-4'-phosphopantothenate + ADP + H(+)</text>
        <dbReference type="Rhea" id="RHEA:16373"/>
        <dbReference type="ChEBI" id="CHEBI:10986"/>
        <dbReference type="ChEBI" id="CHEBI:15378"/>
        <dbReference type="ChEBI" id="CHEBI:29032"/>
        <dbReference type="ChEBI" id="CHEBI:30616"/>
        <dbReference type="ChEBI" id="CHEBI:456216"/>
        <dbReference type="EC" id="2.7.1.33"/>
    </reaction>
</comment>
<comment type="cofactor">
    <cofactor evidence="1">
        <name>NH4(+)</name>
        <dbReference type="ChEBI" id="CHEBI:28938"/>
    </cofactor>
    <cofactor evidence="1">
        <name>K(+)</name>
        <dbReference type="ChEBI" id="CHEBI:29103"/>
    </cofactor>
    <text evidence="1">A monovalent cation. Ammonium or potassium.</text>
</comment>
<comment type="pathway">
    <text evidence="1">Cofactor biosynthesis; coenzyme A biosynthesis; CoA from (R)-pantothenate: step 1/5.</text>
</comment>
<comment type="subunit">
    <text evidence="1">Homodimer.</text>
</comment>
<comment type="subcellular location">
    <subcellularLocation>
        <location evidence="1">Cytoplasm</location>
    </subcellularLocation>
</comment>
<comment type="similarity">
    <text evidence="1">Belongs to the type III pantothenate kinase family.</text>
</comment>
<dbReference type="EC" id="2.7.1.33" evidence="1"/>
<dbReference type="EMBL" id="CP000699">
    <property type="protein sequence ID" value="ABQ69351.1"/>
    <property type="molecule type" value="Genomic_DNA"/>
</dbReference>
<dbReference type="SMR" id="A5VAN5"/>
<dbReference type="STRING" id="392499.Swit_3000"/>
<dbReference type="PaxDb" id="392499-Swit_3000"/>
<dbReference type="KEGG" id="swi:Swit_3000"/>
<dbReference type="eggNOG" id="COG1521">
    <property type="taxonomic scope" value="Bacteria"/>
</dbReference>
<dbReference type="HOGENOM" id="CLU_066627_1_0_5"/>
<dbReference type="OrthoDB" id="9804707at2"/>
<dbReference type="UniPathway" id="UPA00241">
    <property type="reaction ID" value="UER00352"/>
</dbReference>
<dbReference type="Proteomes" id="UP000001989">
    <property type="component" value="Chromosome"/>
</dbReference>
<dbReference type="GO" id="GO:0005737">
    <property type="term" value="C:cytoplasm"/>
    <property type="evidence" value="ECO:0007669"/>
    <property type="project" value="UniProtKB-SubCell"/>
</dbReference>
<dbReference type="GO" id="GO:0005524">
    <property type="term" value="F:ATP binding"/>
    <property type="evidence" value="ECO:0007669"/>
    <property type="project" value="UniProtKB-UniRule"/>
</dbReference>
<dbReference type="GO" id="GO:0046872">
    <property type="term" value="F:metal ion binding"/>
    <property type="evidence" value="ECO:0007669"/>
    <property type="project" value="UniProtKB-KW"/>
</dbReference>
<dbReference type="GO" id="GO:0004594">
    <property type="term" value="F:pantothenate kinase activity"/>
    <property type="evidence" value="ECO:0007669"/>
    <property type="project" value="UniProtKB-UniRule"/>
</dbReference>
<dbReference type="GO" id="GO:0015937">
    <property type="term" value="P:coenzyme A biosynthetic process"/>
    <property type="evidence" value="ECO:0007669"/>
    <property type="project" value="UniProtKB-UniRule"/>
</dbReference>
<dbReference type="CDD" id="cd24015">
    <property type="entry name" value="ASKHA_NBD_PanK-III"/>
    <property type="match status" value="1"/>
</dbReference>
<dbReference type="Gene3D" id="3.30.420.40">
    <property type="match status" value="2"/>
</dbReference>
<dbReference type="HAMAP" id="MF_01274">
    <property type="entry name" value="Pantothen_kinase_3"/>
    <property type="match status" value="1"/>
</dbReference>
<dbReference type="InterPro" id="IPR043129">
    <property type="entry name" value="ATPase_NBD"/>
</dbReference>
<dbReference type="InterPro" id="IPR004619">
    <property type="entry name" value="Type_III_PanK"/>
</dbReference>
<dbReference type="NCBIfam" id="TIGR00671">
    <property type="entry name" value="baf"/>
    <property type="match status" value="1"/>
</dbReference>
<dbReference type="NCBIfam" id="NF009844">
    <property type="entry name" value="PRK13318.1-2"/>
    <property type="match status" value="1"/>
</dbReference>
<dbReference type="NCBIfam" id="NF009848">
    <property type="entry name" value="PRK13318.1-6"/>
    <property type="match status" value="1"/>
</dbReference>
<dbReference type="NCBIfam" id="NF009855">
    <property type="entry name" value="PRK13321.1"/>
    <property type="match status" value="1"/>
</dbReference>
<dbReference type="PANTHER" id="PTHR34265">
    <property type="entry name" value="TYPE III PANTOTHENATE KINASE"/>
    <property type="match status" value="1"/>
</dbReference>
<dbReference type="PANTHER" id="PTHR34265:SF1">
    <property type="entry name" value="TYPE III PANTOTHENATE KINASE"/>
    <property type="match status" value="1"/>
</dbReference>
<dbReference type="Pfam" id="PF03309">
    <property type="entry name" value="Pan_kinase"/>
    <property type="match status" value="1"/>
</dbReference>
<dbReference type="SUPFAM" id="SSF53067">
    <property type="entry name" value="Actin-like ATPase domain"/>
    <property type="match status" value="2"/>
</dbReference>
<keyword id="KW-0067">ATP-binding</keyword>
<keyword id="KW-0173">Coenzyme A biosynthesis</keyword>
<keyword id="KW-0963">Cytoplasm</keyword>
<keyword id="KW-0418">Kinase</keyword>
<keyword id="KW-0479">Metal-binding</keyword>
<keyword id="KW-0547">Nucleotide-binding</keyword>
<keyword id="KW-0630">Potassium</keyword>
<keyword id="KW-1185">Reference proteome</keyword>
<keyword id="KW-0808">Transferase</keyword>
<feature type="chain" id="PRO_1000054411" description="Type III pantothenate kinase">
    <location>
        <begin position="1"/>
        <end position="260"/>
    </location>
</feature>
<feature type="active site" description="Proton acceptor" evidence="1">
    <location>
        <position position="110"/>
    </location>
</feature>
<feature type="binding site" evidence="1">
    <location>
        <begin position="6"/>
        <end position="13"/>
    </location>
    <ligand>
        <name>ATP</name>
        <dbReference type="ChEBI" id="CHEBI:30616"/>
    </ligand>
</feature>
<feature type="binding site" evidence="1">
    <location>
        <begin position="108"/>
        <end position="111"/>
    </location>
    <ligand>
        <name>substrate</name>
    </ligand>
</feature>
<feature type="binding site" evidence="1">
    <location>
        <position position="130"/>
    </location>
    <ligand>
        <name>K(+)</name>
        <dbReference type="ChEBI" id="CHEBI:29103"/>
    </ligand>
</feature>
<feature type="binding site" evidence="1">
    <location>
        <position position="133"/>
    </location>
    <ligand>
        <name>ATP</name>
        <dbReference type="ChEBI" id="CHEBI:30616"/>
    </ligand>
</feature>
<feature type="binding site" evidence="1">
    <location>
        <position position="187"/>
    </location>
    <ligand>
        <name>substrate</name>
    </ligand>
</feature>
<protein>
    <recommendedName>
        <fullName evidence="1">Type III pantothenate kinase</fullName>
        <ecNumber evidence="1">2.7.1.33</ecNumber>
    </recommendedName>
    <alternativeName>
        <fullName evidence="1">PanK-III</fullName>
    </alternativeName>
    <alternativeName>
        <fullName evidence="1">Pantothenic acid kinase</fullName>
    </alternativeName>
</protein>
<reference key="1">
    <citation type="journal article" date="2010" name="J. Bacteriol.">
        <title>Genome sequence of the dioxin-mineralizing bacterium Sphingomonas wittichii RW1.</title>
        <authorList>
            <person name="Miller T.R."/>
            <person name="Delcher A.L."/>
            <person name="Salzberg S.L."/>
            <person name="Saunders E."/>
            <person name="Detter J.C."/>
            <person name="Halden R.U."/>
        </authorList>
    </citation>
    <scope>NUCLEOTIDE SEQUENCE [LARGE SCALE GENOMIC DNA]</scope>
    <source>
        <strain>DSM 6014 / CCUG 31198 / JCM 15750 / NBRC 105917 / EY 4224 / RW1</strain>
    </source>
</reference>